<evidence type="ECO:0000255" key="1">
    <source>
        <dbReference type="HAMAP-Rule" id="MF_00133"/>
    </source>
</evidence>
<name>TRPB_SHEB9</name>
<organism>
    <name type="scientific">Shewanella baltica (strain OS195)</name>
    <dbReference type="NCBI Taxonomy" id="399599"/>
    <lineage>
        <taxon>Bacteria</taxon>
        <taxon>Pseudomonadati</taxon>
        <taxon>Pseudomonadota</taxon>
        <taxon>Gammaproteobacteria</taxon>
        <taxon>Alteromonadales</taxon>
        <taxon>Shewanellaceae</taxon>
        <taxon>Shewanella</taxon>
    </lineage>
</organism>
<accession>A9KTR7</accession>
<comment type="function">
    <text evidence="1">The beta subunit is responsible for the synthesis of L-tryptophan from indole and L-serine.</text>
</comment>
<comment type="catalytic activity">
    <reaction evidence="1">
        <text>(1S,2R)-1-C-(indol-3-yl)glycerol 3-phosphate + L-serine = D-glyceraldehyde 3-phosphate + L-tryptophan + H2O</text>
        <dbReference type="Rhea" id="RHEA:10532"/>
        <dbReference type="ChEBI" id="CHEBI:15377"/>
        <dbReference type="ChEBI" id="CHEBI:33384"/>
        <dbReference type="ChEBI" id="CHEBI:57912"/>
        <dbReference type="ChEBI" id="CHEBI:58866"/>
        <dbReference type="ChEBI" id="CHEBI:59776"/>
        <dbReference type="EC" id="4.2.1.20"/>
    </reaction>
</comment>
<comment type="cofactor">
    <cofactor evidence="1">
        <name>pyridoxal 5'-phosphate</name>
        <dbReference type="ChEBI" id="CHEBI:597326"/>
    </cofactor>
</comment>
<comment type="pathway">
    <text evidence="1">Amino-acid biosynthesis; L-tryptophan biosynthesis; L-tryptophan from chorismate: step 5/5.</text>
</comment>
<comment type="subunit">
    <text evidence="1">Tetramer of two alpha and two beta chains.</text>
</comment>
<comment type="similarity">
    <text evidence="1">Belongs to the TrpB family.</text>
</comment>
<reference key="1">
    <citation type="submission" date="2007-11" db="EMBL/GenBank/DDBJ databases">
        <title>Complete sequence of chromosome of Shewanella baltica OS195.</title>
        <authorList>
            <consortium name="US DOE Joint Genome Institute"/>
            <person name="Copeland A."/>
            <person name="Lucas S."/>
            <person name="Lapidus A."/>
            <person name="Barry K."/>
            <person name="Glavina del Rio T."/>
            <person name="Dalin E."/>
            <person name="Tice H."/>
            <person name="Pitluck S."/>
            <person name="Chain P."/>
            <person name="Malfatti S."/>
            <person name="Shin M."/>
            <person name="Vergez L."/>
            <person name="Schmutz J."/>
            <person name="Larimer F."/>
            <person name="Land M."/>
            <person name="Hauser L."/>
            <person name="Kyrpides N."/>
            <person name="Kim E."/>
            <person name="Brettar I."/>
            <person name="Rodrigues J."/>
            <person name="Konstantinidis K."/>
            <person name="Klappenbach J."/>
            <person name="Hofle M."/>
            <person name="Tiedje J."/>
            <person name="Richardson P."/>
        </authorList>
    </citation>
    <scope>NUCLEOTIDE SEQUENCE [LARGE SCALE GENOMIC DNA]</scope>
    <source>
        <strain>OS195</strain>
    </source>
</reference>
<gene>
    <name evidence="1" type="primary">trpB</name>
    <name type="ordered locus">Sbal195_2805</name>
</gene>
<proteinExistence type="inferred from homology"/>
<dbReference type="EC" id="4.2.1.20" evidence="1"/>
<dbReference type="EMBL" id="CP000891">
    <property type="protein sequence ID" value="ABX49972.1"/>
    <property type="molecule type" value="Genomic_DNA"/>
</dbReference>
<dbReference type="RefSeq" id="WP_006085433.1">
    <property type="nucleotide sequence ID" value="NC_009997.1"/>
</dbReference>
<dbReference type="SMR" id="A9KTR7"/>
<dbReference type="GeneID" id="11772896"/>
<dbReference type="KEGG" id="sbn:Sbal195_2805"/>
<dbReference type="HOGENOM" id="CLU_016734_3_1_6"/>
<dbReference type="UniPathway" id="UPA00035">
    <property type="reaction ID" value="UER00044"/>
</dbReference>
<dbReference type="Proteomes" id="UP000000770">
    <property type="component" value="Chromosome"/>
</dbReference>
<dbReference type="GO" id="GO:0005737">
    <property type="term" value="C:cytoplasm"/>
    <property type="evidence" value="ECO:0007669"/>
    <property type="project" value="TreeGrafter"/>
</dbReference>
<dbReference type="GO" id="GO:0004834">
    <property type="term" value="F:tryptophan synthase activity"/>
    <property type="evidence" value="ECO:0007669"/>
    <property type="project" value="UniProtKB-UniRule"/>
</dbReference>
<dbReference type="CDD" id="cd06446">
    <property type="entry name" value="Trp-synth_B"/>
    <property type="match status" value="1"/>
</dbReference>
<dbReference type="FunFam" id="3.40.50.1100:FF:000001">
    <property type="entry name" value="Tryptophan synthase beta chain"/>
    <property type="match status" value="1"/>
</dbReference>
<dbReference type="FunFam" id="3.40.50.1100:FF:000004">
    <property type="entry name" value="Tryptophan synthase beta chain"/>
    <property type="match status" value="1"/>
</dbReference>
<dbReference type="Gene3D" id="3.40.50.1100">
    <property type="match status" value="2"/>
</dbReference>
<dbReference type="HAMAP" id="MF_00133">
    <property type="entry name" value="Trp_synth_beta"/>
    <property type="match status" value="1"/>
</dbReference>
<dbReference type="InterPro" id="IPR006653">
    <property type="entry name" value="Trp_synth_b_CS"/>
</dbReference>
<dbReference type="InterPro" id="IPR006654">
    <property type="entry name" value="Trp_synth_beta"/>
</dbReference>
<dbReference type="InterPro" id="IPR023026">
    <property type="entry name" value="Trp_synth_beta/beta-like"/>
</dbReference>
<dbReference type="InterPro" id="IPR001926">
    <property type="entry name" value="TrpB-like_PALP"/>
</dbReference>
<dbReference type="InterPro" id="IPR036052">
    <property type="entry name" value="TrpB-like_PALP_sf"/>
</dbReference>
<dbReference type="NCBIfam" id="TIGR00263">
    <property type="entry name" value="trpB"/>
    <property type="match status" value="1"/>
</dbReference>
<dbReference type="PANTHER" id="PTHR48077:SF3">
    <property type="entry name" value="TRYPTOPHAN SYNTHASE"/>
    <property type="match status" value="1"/>
</dbReference>
<dbReference type="PANTHER" id="PTHR48077">
    <property type="entry name" value="TRYPTOPHAN SYNTHASE-RELATED"/>
    <property type="match status" value="1"/>
</dbReference>
<dbReference type="Pfam" id="PF00291">
    <property type="entry name" value="PALP"/>
    <property type="match status" value="1"/>
</dbReference>
<dbReference type="PIRSF" id="PIRSF001413">
    <property type="entry name" value="Trp_syn_beta"/>
    <property type="match status" value="1"/>
</dbReference>
<dbReference type="SUPFAM" id="SSF53686">
    <property type="entry name" value="Tryptophan synthase beta subunit-like PLP-dependent enzymes"/>
    <property type="match status" value="1"/>
</dbReference>
<dbReference type="PROSITE" id="PS00168">
    <property type="entry name" value="TRP_SYNTHASE_BETA"/>
    <property type="match status" value="1"/>
</dbReference>
<keyword id="KW-0028">Amino-acid biosynthesis</keyword>
<keyword id="KW-0057">Aromatic amino acid biosynthesis</keyword>
<keyword id="KW-0456">Lyase</keyword>
<keyword id="KW-0663">Pyridoxal phosphate</keyword>
<keyword id="KW-0822">Tryptophan biosynthesis</keyword>
<feature type="chain" id="PRO_1000076406" description="Tryptophan synthase beta chain">
    <location>
        <begin position="1"/>
        <end position="396"/>
    </location>
</feature>
<feature type="modified residue" description="N6-(pyridoxal phosphate)lysine" evidence="1">
    <location>
        <position position="88"/>
    </location>
</feature>
<protein>
    <recommendedName>
        <fullName evidence="1">Tryptophan synthase beta chain</fullName>
        <ecNumber evidence="1">4.2.1.20</ecNumber>
    </recommendedName>
</protein>
<sequence length="396" mass="42895">MSKLKLNPYFGEYGGMYVPQILVPALKQLETAFVEAQEDDDFKAEFTDLLKNYAGRPTALTLTRNLSPNPMVKIYLKREDLLHGGAHKTNQVLGQALLAKRMGKKEIIAETGAGQHGVATALACALLGLKCKVYMGAKDVARQSPNVFRMRLMGAEVIPVTSGSATLKDACNEAMRDWSGSYEKAHYLLGTAAGPHPFPTIVREFQRIIGEETKKQMLEREGRLPDAVIACVGGGSNAIGMFADFIDEPSVELIGVEPAGKGIDTPMHGAPLKHGKTGIFFGMKAPLMQDREGQIEESYSISAGLDFPSVGPQHAHLNATGRARYESATDDEALEAFQQLARCEGIIPALESAHAIAYAVKMARECTKETILVVNLSGRGDKDIFTVSDILNGKEE</sequence>